<evidence type="ECO:0000250" key="1"/>
<evidence type="ECO:0000256" key="2">
    <source>
        <dbReference type="SAM" id="MobiDB-lite"/>
    </source>
</evidence>
<evidence type="ECO:0000305" key="3"/>
<sequence>MVAKKRTQLRAKAMRQRRNSSEAMETEELPPDPKAFLHQLRESKREKQLNRSQSFLNRLRDQAGNGGISKSALRRRKKRMKEELKPRMEDLLTSLKEEGVLEEDESGELAAVTGVTAITASNGYSGLHDTAEACGTVRIRKNEPSIRTQRGAKLLTTKEQERFTKVISNERFRSSPFETLREIIKSRK</sequence>
<organism>
    <name type="scientific">Eremothecium gossypii (strain ATCC 10895 / CBS 109.51 / FGSC 9923 / NRRL Y-1056)</name>
    <name type="common">Yeast</name>
    <name type="synonym">Ashbya gossypii</name>
    <dbReference type="NCBI Taxonomy" id="284811"/>
    <lineage>
        <taxon>Eukaryota</taxon>
        <taxon>Fungi</taxon>
        <taxon>Dikarya</taxon>
        <taxon>Ascomycota</taxon>
        <taxon>Saccharomycotina</taxon>
        <taxon>Saccharomycetes</taxon>
        <taxon>Saccharomycetales</taxon>
        <taxon>Saccharomycetaceae</taxon>
        <taxon>Eremothecium</taxon>
    </lineage>
</organism>
<protein>
    <recommendedName>
        <fullName>Ribosome biogenesis protein SLX9</fullName>
    </recommendedName>
</protein>
<proteinExistence type="inferred from homology"/>
<feature type="chain" id="PRO_0000333447" description="Ribosome biogenesis protein SLX9">
    <location>
        <begin position="1"/>
        <end position="188"/>
    </location>
</feature>
<feature type="region of interest" description="Disordered" evidence="2">
    <location>
        <begin position="1"/>
        <end position="83"/>
    </location>
</feature>
<feature type="compositionally biased region" description="Basic residues" evidence="2">
    <location>
        <begin position="1"/>
        <end position="18"/>
    </location>
</feature>
<feature type="compositionally biased region" description="Basic and acidic residues" evidence="2">
    <location>
        <begin position="39"/>
        <end position="49"/>
    </location>
</feature>
<comment type="function">
    <text evidence="1">Involved in ribosome biogenesis. Required for normal pre-rRNA processing in internal transcribed spacer 1 (ITS1). May be involved in the movements of the replication forks (By similarity).</text>
</comment>
<comment type="subunit">
    <text evidence="1">Interacts with the 35S, 23S and 20S pre-rRNAs and with the U3 snoRNA.</text>
</comment>
<comment type="subcellular location">
    <subcellularLocation>
        <location evidence="1">Nucleus</location>
        <location evidence="1">Nucleolus</location>
    </subcellularLocation>
</comment>
<comment type="similarity">
    <text evidence="3">Belongs to the SLX9 family.</text>
</comment>
<gene>
    <name type="primary">SLX9</name>
    <name type="ordered locus">AEL319C</name>
</gene>
<reference key="1">
    <citation type="journal article" date="2004" name="Science">
        <title>The Ashbya gossypii genome as a tool for mapping the ancient Saccharomyces cerevisiae genome.</title>
        <authorList>
            <person name="Dietrich F.S."/>
            <person name="Voegeli S."/>
            <person name="Brachat S."/>
            <person name="Lerch A."/>
            <person name="Gates K."/>
            <person name="Steiner S."/>
            <person name="Mohr C."/>
            <person name="Poehlmann R."/>
            <person name="Luedi P."/>
            <person name="Choi S."/>
            <person name="Wing R.A."/>
            <person name="Flavier A."/>
            <person name="Gaffney T.D."/>
            <person name="Philippsen P."/>
        </authorList>
    </citation>
    <scope>NUCLEOTIDE SEQUENCE [LARGE SCALE GENOMIC DNA]</scope>
    <source>
        <strain>ATCC 10895 / CBS 109.51 / FGSC 9923 / NRRL Y-1056</strain>
    </source>
</reference>
<reference key="2">
    <citation type="journal article" date="2013" name="G3 (Bethesda)">
        <title>Genomes of Ashbya fungi isolated from insects reveal four mating-type loci, numerous translocations, lack of transposons, and distinct gene duplications.</title>
        <authorList>
            <person name="Dietrich F.S."/>
            <person name="Voegeli S."/>
            <person name="Kuo S."/>
            <person name="Philippsen P."/>
        </authorList>
    </citation>
    <scope>GENOME REANNOTATION</scope>
    <source>
        <strain>ATCC 10895 / CBS 109.51 / FGSC 9923 / NRRL Y-1056</strain>
    </source>
</reference>
<keyword id="KW-0539">Nucleus</keyword>
<keyword id="KW-1185">Reference proteome</keyword>
<keyword id="KW-0690">Ribosome biogenesis</keyword>
<keyword id="KW-0698">rRNA processing</keyword>
<dbReference type="EMBL" id="AE016818">
    <property type="protein sequence ID" value="AAS52365.1"/>
    <property type="molecule type" value="Genomic_DNA"/>
</dbReference>
<dbReference type="RefSeq" id="NP_984541.1">
    <property type="nucleotide sequence ID" value="NM_209894.1"/>
</dbReference>
<dbReference type="FunCoup" id="Q758S2">
    <property type="interactions" value="283"/>
</dbReference>
<dbReference type="STRING" id="284811.Q758S2"/>
<dbReference type="EnsemblFungi" id="AAS52365">
    <property type="protein sequence ID" value="AAS52365"/>
    <property type="gene ID" value="AGOS_AEL319C"/>
</dbReference>
<dbReference type="GeneID" id="4620711"/>
<dbReference type="KEGG" id="ago:AGOS_AEL319C"/>
<dbReference type="eggNOG" id="ENOG502S2IS">
    <property type="taxonomic scope" value="Eukaryota"/>
</dbReference>
<dbReference type="HOGENOM" id="CLU_1372424_0_0_1"/>
<dbReference type="InParanoid" id="Q758S2"/>
<dbReference type="OMA" id="PKAYLHQ"/>
<dbReference type="OrthoDB" id="4068648at2759"/>
<dbReference type="Proteomes" id="UP000000591">
    <property type="component" value="Chromosome V"/>
</dbReference>
<dbReference type="GO" id="GO:0030686">
    <property type="term" value="C:90S preribosome"/>
    <property type="evidence" value="ECO:0007669"/>
    <property type="project" value="EnsemblFungi"/>
</dbReference>
<dbReference type="GO" id="GO:0005730">
    <property type="term" value="C:nucleolus"/>
    <property type="evidence" value="ECO:0007669"/>
    <property type="project" value="UniProtKB-SubCell"/>
</dbReference>
<dbReference type="GO" id="GO:0030688">
    <property type="term" value="C:preribosome, small subunit precursor"/>
    <property type="evidence" value="ECO:0007669"/>
    <property type="project" value="EnsemblFungi"/>
</dbReference>
<dbReference type="GO" id="GO:0032040">
    <property type="term" value="C:small-subunit processome"/>
    <property type="evidence" value="ECO:0007669"/>
    <property type="project" value="EnsemblFungi"/>
</dbReference>
<dbReference type="GO" id="GO:0051880">
    <property type="term" value="F:G-quadruplex DNA binding"/>
    <property type="evidence" value="ECO:0007669"/>
    <property type="project" value="EnsemblFungi"/>
</dbReference>
<dbReference type="GO" id="GO:0000462">
    <property type="term" value="P:maturation of SSU-rRNA from tricistronic rRNA transcript (SSU-rRNA, 5.8S rRNA, LSU-rRNA)"/>
    <property type="evidence" value="ECO:0007669"/>
    <property type="project" value="EnsemblFungi"/>
</dbReference>
<dbReference type="GO" id="GO:0000056">
    <property type="term" value="P:ribosomal small subunit export from nucleus"/>
    <property type="evidence" value="ECO:0007669"/>
    <property type="project" value="EnsemblFungi"/>
</dbReference>
<dbReference type="InterPro" id="IPR028160">
    <property type="entry name" value="Slx9-like"/>
</dbReference>
<dbReference type="Pfam" id="PF15341">
    <property type="entry name" value="SLX9"/>
    <property type="match status" value="1"/>
</dbReference>
<name>SLX9_EREGS</name>
<accession>Q758S2</accession>